<evidence type="ECO:0000255" key="1">
    <source>
        <dbReference type="HAMAP-Rule" id="MF_01838"/>
    </source>
</evidence>
<keyword id="KW-0275">Fatty acid biosynthesis</keyword>
<keyword id="KW-0276">Fatty acid metabolism</keyword>
<keyword id="KW-0444">Lipid biosynthesis</keyword>
<keyword id="KW-0443">Lipid metabolism</keyword>
<keyword id="KW-0520">NAD</keyword>
<keyword id="KW-0560">Oxidoreductase</keyword>
<dbReference type="EC" id="1.3.1.9" evidence="1"/>
<dbReference type="EMBL" id="CP000086">
    <property type="protein sequence ID" value="ABC38827.1"/>
    <property type="molecule type" value="Genomic_DNA"/>
</dbReference>
<dbReference type="RefSeq" id="WP_009891718.1">
    <property type="nucleotide sequence ID" value="NZ_CP008785.1"/>
</dbReference>
<dbReference type="SMR" id="Q2SV62"/>
<dbReference type="GeneID" id="45122376"/>
<dbReference type="KEGG" id="bte:BTH_I2672"/>
<dbReference type="HOGENOM" id="CLU_057698_1_0_4"/>
<dbReference type="UniPathway" id="UPA00094"/>
<dbReference type="Proteomes" id="UP000001930">
    <property type="component" value="Chromosome I"/>
</dbReference>
<dbReference type="GO" id="GO:0004318">
    <property type="term" value="F:enoyl-[acyl-carrier-protein] reductase (NADH) activity"/>
    <property type="evidence" value="ECO:0007669"/>
    <property type="project" value="UniProtKB-UniRule"/>
</dbReference>
<dbReference type="GO" id="GO:0051287">
    <property type="term" value="F:NAD binding"/>
    <property type="evidence" value="ECO:0007669"/>
    <property type="project" value="UniProtKB-UniRule"/>
</dbReference>
<dbReference type="GO" id="GO:0050343">
    <property type="term" value="F:trans-2-enoyl-CoA reductase (NADH) activity"/>
    <property type="evidence" value="ECO:0007669"/>
    <property type="project" value="TreeGrafter"/>
</dbReference>
<dbReference type="GO" id="GO:0006633">
    <property type="term" value="P:fatty acid biosynthetic process"/>
    <property type="evidence" value="ECO:0007669"/>
    <property type="project" value="UniProtKB-UniRule"/>
</dbReference>
<dbReference type="FunFam" id="3.40.50.720:FF:000221">
    <property type="entry name" value="Enoyl-[acyl-carrier-protein] reductase [NADH]"/>
    <property type="match status" value="1"/>
</dbReference>
<dbReference type="Gene3D" id="3.40.50.720">
    <property type="entry name" value="NAD(P)-binding Rossmann-like Domain"/>
    <property type="match status" value="1"/>
</dbReference>
<dbReference type="HAMAP" id="MF_01838">
    <property type="entry name" value="FabV_reductase"/>
    <property type="match status" value="1"/>
</dbReference>
<dbReference type="InterPro" id="IPR024906">
    <property type="entry name" value="Eno_Rdtase_FAD-bd_dom"/>
</dbReference>
<dbReference type="InterPro" id="IPR024910">
    <property type="entry name" value="Enoyl-CoA_Rdtase_cat_dom"/>
</dbReference>
<dbReference type="InterPro" id="IPR050048">
    <property type="entry name" value="FabV-like_NADH_b"/>
</dbReference>
<dbReference type="InterPro" id="IPR010758">
    <property type="entry name" value="Trans-2-enoyl-CoA_reductase"/>
</dbReference>
<dbReference type="NCBIfam" id="NF043048">
    <property type="entry name" value="EnoyACPredFabV"/>
    <property type="match status" value="1"/>
</dbReference>
<dbReference type="NCBIfam" id="NF010177">
    <property type="entry name" value="PRK13656.1"/>
    <property type="match status" value="1"/>
</dbReference>
<dbReference type="PANTHER" id="PTHR37480">
    <property type="entry name" value="ENOYL-[ACYL-CARRIER-PROTEIN] REDUCTASE [NADH]"/>
    <property type="match status" value="1"/>
</dbReference>
<dbReference type="PANTHER" id="PTHR37480:SF1">
    <property type="entry name" value="ENOYL-[ACYL-CARRIER-PROTEIN] REDUCTASE [NADH]"/>
    <property type="match status" value="1"/>
</dbReference>
<dbReference type="Pfam" id="PF07055">
    <property type="entry name" value="Eno-Rase_FAD_bd"/>
    <property type="match status" value="1"/>
</dbReference>
<dbReference type="Pfam" id="PF12242">
    <property type="entry name" value="Eno-Rase_NADH_b"/>
    <property type="match status" value="1"/>
</dbReference>
<dbReference type="Pfam" id="PF12241">
    <property type="entry name" value="Enoyl_reductase"/>
    <property type="match status" value="1"/>
</dbReference>
<protein>
    <recommendedName>
        <fullName evidence="1">Enoyl-[acyl-carrier-protein] reductase [NADH]</fullName>
        <shortName evidence="1">ENR</shortName>
        <ecNumber evidence="1">1.3.1.9</ecNumber>
    </recommendedName>
</protein>
<organism>
    <name type="scientific">Burkholderia thailandensis (strain ATCC 700388 / DSM 13276 / CCUG 48851 / CIP 106301 / E264)</name>
    <dbReference type="NCBI Taxonomy" id="271848"/>
    <lineage>
        <taxon>Bacteria</taxon>
        <taxon>Pseudomonadati</taxon>
        <taxon>Pseudomonadota</taxon>
        <taxon>Betaproteobacteria</taxon>
        <taxon>Burkholderiales</taxon>
        <taxon>Burkholderiaceae</taxon>
        <taxon>Burkholderia</taxon>
        <taxon>pseudomallei group</taxon>
    </lineage>
</organism>
<gene>
    <name evidence="1" type="primary">fabV</name>
    <name type="ordered locus">BTH_I2672</name>
</gene>
<proteinExistence type="inferred from homology"/>
<comment type="function">
    <text evidence="1">Involved in the final reduction of the elongation cycle of fatty acid synthesis (FAS II). Catalyzes the reduction of a carbon-carbon double bond in an enoyl moiety that is covalently linked to an acyl carrier protein (ACP).</text>
</comment>
<comment type="catalytic activity">
    <reaction evidence="1">
        <text>a 2,3-saturated acyl-[ACP] + NAD(+) = a (2E)-enoyl-[ACP] + NADH + H(+)</text>
        <dbReference type="Rhea" id="RHEA:10240"/>
        <dbReference type="Rhea" id="RHEA-COMP:9925"/>
        <dbReference type="Rhea" id="RHEA-COMP:9926"/>
        <dbReference type="ChEBI" id="CHEBI:15378"/>
        <dbReference type="ChEBI" id="CHEBI:57540"/>
        <dbReference type="ChEBI" id="CHEBI:57945"/>
        <dbReference type="ChEBI" id="CHEBI:78784"/>
        <dbReference type="ChEBI" id="CHEBI:78785"/>
        <dbReference type="EC" id="1.3.1.9"/>
    </reaction>
</comment>
<comment type="pathway">
    <text evidence="1">Lipid metabolism; fatty acid biosynthesis.</text>
</comment>
<comment type="subunit">
    <text evidence="1">Monomer.</text>
</comment>
<comment type="similarity">
    <text evidence="1">Belongs to the TER reductase family.</text>
</comment>
<sequence length="397" mass="42746">MIIKPRVRGFICVTTHPAGCAASVREQIAYVAGRGPIERGPKKVLVIGASTGYGLAARIAAAFGAGAATLGVFFERAPLDAKPGTAGWYNSAAFHDEAAALGLYAASINGDAFSDEIKQKTIDAIKRDLGQVDLVVYSVAAPRRTHPKTGITHQSTLKPIGQAVRLRGIDTDNEAIKETLLQPATPDEIAGTVAVMGGEDWRMWIDALDAAGVLADGAKTTAFTYLGEKVTHDIYWNGSIGEAKKDLDRTVLALRDKLAARGGDARVSVLKAVVTQASSAIPMMPLYLSLLFKVMKARGTHEGCIEQVDGLFRDSLYGAPPHVDAEGRLRADRLELDPAVQAQVLELWDRVTDDNLYALTDFAGYKTEFLRLFGFEIDGVDYDAHVDPNIRIPNLIE</sequence>
<name>FABV_BURTA</name>
<reference key="1">
    <citation type="journal article" date="2005" name="BMC Genomics">
        <title>Bacterial genome adaptation to niches: divergence of the potential virulence genes in three Burkholderia species of different survival strategies.</title>
        <authorList>
            <person name="Kim H.S."/>
            <person name="Schell M.A."/>
            <person name="Yu Y."/>
            <person name="Ulrich R.L."/>
            <person name="Sarria S.H."/>
            <person name="Nierman W.C."/>
            <person name="DeShazer D."/>
        </authorList>
    </citation>
    <scope>NUCLEOTIDE SEQUENCE [LARGE SCALE GENOMIC DNA]</scope>
    <source>
        <strain>ATCC 700388 / DSM 13276 / CCUG 48851 / CIP 106301 / E264</strain>
    </source>
</reference>
<accession>Q2SV62</accession>
<feature type="chain" id="PRO_1000070476" description="Enoyl-[acyl-carrier-protein] reductase [NADH]">
    <location>
        <begin position="1"/>
        <end position="397"/>
    </location>
</feature>
<feature type="active site" description="Proton donor" evidence="1">
    <location>
        <position position="235"/>
    </location>
</feature>
<feature type="binding site" evidence="1">
    <location>
        <begin position="48"/>
        <end position="53"/>
    </location>
    <ligand>
        <name>NAD(+)</name>
        <dbReference type="ChEBI" id="CHEBI:57540"/>
    </ligand>
</feature>
<feature type="binding site" evidence="1">
    <location>
        <begin position="74"/>
        <end position="75"/>
    </location>
    <ligand>
        <name>NAD(+)</name>
        <dbReference type="ChEBI" id="CHEBI:57540"/>
    </ligand>
</feature>
<feature type="binding site" evidence="1">
    <location>
        <begin position="111"/>
        <end position="112"/>
    </location>
    <ligand>
        <name>NAD(+)</name>
        <dbReference type="ChEBI" id="CHEBI:57540"/>
    </ligand>
</feature>
<feature type="binding site" evidence="1">
    <location>
        <begin position="139"/>
        <end position="140"/>
    </location>
    <ligand>
        <name>NAD(+)</name>
        <dbReference type="ChEBI" id="CHEBI:57540"/>
    </ligand>
</feature>
<feature type="binding site" evidence="1">
    <location>
        <position position="225"/>
    </location>
    <ligand>
        <name>substrate</name>
    </ligand>
</feature>
<feature type="binding site" evidence="1">
    <location>
        <position position="244"/>
    </location>
    <ligand>
        <name>NAD(+)</name>
        <dbReference type="ChEBI" id="CHEBI:57540"/>
    </ligand>
</feature>
<feature type="binding site" evidence="1">
    <location>
        <begin position="273"/>
        <end position="275"/>
    </location>
    <ligand>
        <name>NAD(+)</name>
        <dbReference type="ChEBI" id="CHEBI:57540"/>
    </ligand>
</feature>
<feature type="site" description="Plays an important role in discriminating NADH against NADPH" evidence="1">
    <location>
        <position position="75"/>
    </location>
</feature>